<reference key="1">
    <citation type="journal article" date="2003" name="Appl. Microbiol. Biotechnol.">
        <title>The Corynebacterium glutamicum genome: features and impacts on biotechnological processes.</title>
        <authorList>
            <person name="Ikeda M."/>
            <person name="Nakagawa S."/>
        </authorList>
    </citation>
    <scope>NUCLEOTIDE SEQUENCE [LARGE SCALE GENOMIC DNA]</scope>
    <source>
        <strain>ATCC 13032 / DSM 20300 / JCM 1318 / BCRC 11384 / CCUG 27702 / LMG 3730 / NBRC 12168 / NCIMB 10025 / NRRL B-2784 / 534</strain>
    </source>
</reference>
<reference key="2">
    <citation type="journal article" date="2003" name="J. Biotechnol.">
        <title>The complete Corynebacterium glutamicum ATCC 13032 genome sequence and its impact on the production of L-aspartate-derived amino acids and vitamins.</title>
        <authorList>
            <person name="Kalinowski J."/>
            <person name="Bathe B."/>
            <person name="Bartels D."/>
            <person name="Bischoff N."/>
            <person name="Bott M."/>
            <person name="Burkovski A."/>
            <person name="Dusch N."/>
            <person name="Eggeling L."/>
            <person name="Eikmanns B.J."/>
            <person name="Gaigalat L."/>
            <person name="Goesmann A."/>
            <person name="Hartmann M."/>
            <person name="Huthmacher K."/>
            <person name="Kraemer R."/>
            <person name="Linke B."/>
            <person name="McHardy A.C."/>
            <person name="Meyer F."/>
            <person name="Moeckel B."/>
            <person name="Pfefferle W."/>
            <person name="Puehler A."/>
            <person name="Rey D.A."/>
            <person name="Rueckert C."/>
            <person name="Rupp O."/>
            <person name="Sahm H."/>
            <person name="Wendisch V.F."/>
            <person name="Wiegraebe I."/>
            <person name="Tauch A."/>
        </authorList>
    </citation>
    <scope>NUCLEOTIDE SEQUENCE [LARGE SCALE GENOMIC DNA]</scope>
    <source>
        <strain>ATCC 13032 / DSM 20300 / JCM 1318 / BCRC 11384 / CCUG 27702 / LMG 3730 / NBRC 12168 / NCIMB 10025 / NRRL B-2784 / 534</strain>
    </source>
</reference>
<organism>
    <name type="scientific">Corynebacterium glutamicum (strain ATCC 13032 / DSM 20300 / JCM 1318 / BCRC 11384 / CCUG 27702 / LMG 3730 / NBRC 12168 / NCIMB 10025 / NRRL B-2784 / 534)</name>
    <dbReference type="NCBI Taxonomy" id="196627"/>
    <lineage>
        <taxon>Bacteria</taxon>
        <taxon>Bacillati</taxon>
        <taxon>Actinomycetota</taxon>
        <taxon>Actinomycetes</taxon>
        <taxon>Mycobacteriales</taxon>
        <taxon>Corynebacteriaceae</taxon>
        <taxon>Corynebacterium</taxon>
    </lineage>
</organism>
<gene>
    <name evidence="1" type="primary">pstB</name>
    <name type="ordered locus">Cgl2572</name>
    <name type="ordered locus">cg2843</name>
</gene>
<evidence type="ECO:0000255" key="1">
    <source>
        <dbReference type="HAMAP-Rule" id="MF_01702"/>
    </source>
</evidence>
<evidence type="ECO:0000305" key="2"/>
<keyword id="KW-0067">ATP-binding</keyword>
<keyword id="KW-1003">Cell membrane</keyword>
<keyword id="KW-0472">Membrane</keyword>
<keyword id="KW-0547">Nucleotide-binding</keyword>
<keyword id="KW-0592">Phosphate transport</keyword>
<keyword id="KW-1185">Reference proteome</keyword>
<keyword id="KW-1278">Translocase</keyword>
<keyword id="KW-0813">Transport</keyword>
<name>PSTB_CORGL</name>
<proteinExistence type="inferred from homology"/>
<comment type="function">
    <text evidence="1">Part of the ABC transporter complex PstSACB involved in phosphate import. Responsible for energy coupling to the transport system.</text>
</comment>
<comment type="catalytic activity">
    <reaction evidence="1">
        <text>phosphate(out) + ATP + H2O = ADP + 2 phosphate(in) + H(+)</text>
        <dbReference type="Rhea" id="RHEA:24440"/>
        <dbReference type="ChEBI" id="CHEBI:15377"/>
        <dbReference type="ChEBI" id="CHEBI:15378"/>
        <dbReference type="ChEBI" id="CHEBI:30616"/>
        <dbReference type="ChEBI" id="CHEBI:43474"/>
        <dbReference type="ChEBI" id="CHEBI:456216"/>
        <dbReference type="EC" id="7.3.2.1"/>
    </reaction>
</comment>
<comment type="subunit">
    <text evidence="1">The complex is composed of two ATP-binding proteins (PstB), two transmembrane proteins (PstC and PstA) and a solute-binding protein (PstS).</text>
</comment>
<comment type="subcellular location">
    <subcellularLocation>
        <location evidence="1">Cell membrane</location>
        <topology evidence="1">Peripheral membrane protein</topology>
    </subcellularLocation>
</comment>
<comment type="similarity">
    <text evidence="1">Belongs to the ABC transporter superfamily. Phosphate importer (TC 3.A.1.7) family.</text>
</comment>
<comment type="sequence caution" evidence="2">
    <conflict type="erroneous initiation">
        <sequence resource="EMBL-CDS" id="BAB99965"/>
    </conflict>
</comment>
<comment type="sequence caution" evidence="2">
    <conflict type="erroneous initiation">
        <sequence resource="EMBL-CDS" id="CAF21233"/>
    </conflict>
</comment>
<feature type="chain" id="PRO_0000092806" description="Phosphate import ATP-binding protein PstB">
    <location>
        <begin position="1"/>
        <end position="257"/>
    </location>
</feature>
<feature type="domain" description="ABC transporter" evidence="1">
    <location>
        <begin position="4"/>
        <end position="246"/>
    </location>
</feature>
<feature type="binding site" evidence="1">
    <location>
        <begin position="36"/>
        <end position="43"/>
    </location>
    <ligand>
        <name>ATP</name>
        <dbReference type="ChEBI" id="CHEBI:30616"/>
    </ligand>
</feature>
<sequence length="257" mass="28213">MSKLKLNDVNIYYGDFHAVQNVNLEVPARSVTAFIGPSGCGKSTVLRSINRMHEVTPGAYVKGEILLDGENIYGSKIDPVAVRNTIGMVFQKANPFPTMSIEDNVVAGLKLSGEKNKKKLKEVAEKSLRGANLWEEVKDRLDKPGGGLSGGQQQRLCIARAIAVEPEILLMDEPCSALDPISTLAVEDLIHELKEEFTIVIVTHNMQQAARVSDQTAFYSLEATGRPGRLVEIGPTKKIFENPDQKETEDYISGRFG</sequence>
<accession>Q8NMK1</accession>
<protein>
    <recommendedName>
        <fullName evidence="1">Phosphate import ATP-binding protein PstB</fullName>
        <ecNumber evidence="1">7.3.2.1</ecNumber>
    </recommendedName>
    <alternativeName>
        <fullName evidence="1">ABC phosphate transporter</fullName>
    </alternativeName>
    <alternativeName>
        <fullName evidence="1">Phosphate-transporting ATPase</fullName>
    </alternativeName>
</protein>
<dbReference type="EC" id="7.3.2.1" evidence="1"/>
<dbReference type="EMBL" id="BA000036">
    <property type="protein sequence ID" value="BAB99965.1"/>
    <property type="status" value="ALT_INIT"/>
    <property type="molecule type" value="Genomic_DNA"/>
</dbReference>
<dbReference type="EMBL" id="BX927155">
    <property type="protein sequence ID" value="CAF21233.1"/>
    <property type="status" value="ALT_INIT"/>
    <property type="molecule type" value="Genomic_DNA"/>
</dbReference>
<dbReference type="RefSeq" id="NP_601770.1">
    <property type="nucleotide sequence ID" value="NC_003450.3"/>
</dbReference>
<dbReference type="RefSeq" id="WP_011015221.1">
    <property type="nucleotide sequence ID" value="NC_006958.1"/>
</dbReference>
<dbReference type="SMR" id="Q8NMK1"/>
<dbReference type="STRING" id="196627.cg2843"/>
<dbReference type="GeneID" id="1020518"/>
<dbReference type="KEGG" id="cgb:cg2843"/>
<dbReference type="KEGG" id="cgl:Cgl2572"/>
<dbReference type="PATRIC" id="fig|196627.13.peg.2506"/>
<dbReference type="eggNOG" id="COG1117">
    <property type="taxonomic scope" value="Bacteria"/>
</dbReference>
<dbReference type="HOGENOM" id="CLU_000604_1_22_11"/>
<dbReference type="OrthoDB" id="4398079at2"/>
<dbReference type="BioCyc" id="CORYNE:G18NG-12188-MONOMER"/>
<dbReference type="Proteomes" id="UP000000582">
    <property type="component" value="Chromosome"/>
</dbReference>
<dbReference type="Proteomes" id="UP000001009">
    <property type="component" value="Chromosome"/>
</dbReference>
<dbReference type="GO" id="GO:0005886">
    <property type="term" value="C:plasma membrane"/>
    <property type="evidence" value="ECO:0007669"/>
    <property type="project" value="UniProtKB-SubCell"/>
</dbReference>
<dbReference type="GO" id="GO:0005524">
    <property type="term" value="F:ATP binding"/>
    <property type="evidence" value="ECO:0007669"/>
    <property type="project" value="UniProtKB-KW"/>
</dbReference>
<dbReference type="GO" id="GO:0016887">
    <property type="term" value="F:ATP hydrolysis activity"/>
    <property type="evidence" value="ECO:0007669"/>
    <property type="project" value="InterPro"/>
</dbReference>
<dbReference type="GO" id="GO:0015415">
    <property type="term" value="F:ATPase-coupled phosphate ion transmembrane transporter activity"/>
    <property type="evidence" value="ECO:0007669"/>
    <property type="project" value="UniProtKB-EC"/>
</dbReference>
<dbReference type="GO" id="GO:0035435">
    <property type="term" value="P:phosphate ion transmembrane transport"/>
    <property type="evidence" value="ECO:0007669"/>
    <property type="project" value="InterPro"/>
</dbReference>
<dbReference type="CDD" id="cd03260">
    <property type="entry name" value="ABC_PstB_phosphate_transporter"/>
    <property type="match status" value="1"/>
</dbReference>
<dbReference type="Gene3D" id="3.40.50.300">
    <property type="entry name" value="P-loop containing nucleotide triphosphate hydrolases"/>
    <property type="match status" value="1"/>
</dbReference>
<dbReference type="InterPro" id="IPR003593">
    <property type="entry name" value="AAA+_ATPase"/>
</dbReference>
<dbReference type="InterPro" id="IPR003439">
    <property type="entry name" value="ABC_transporter-like_ATP-bd"/>
</dbReference>
<dbReference type="InterPro" id="IPR017871">
    <property type="entry name" value="ABC_transporter-like_CS"/>
</dbReference>
<dbReference type="InterPro" id="IPR027417">
    <property type="entry name" value="P-loop_NTPase"/>
</dbReference>
<dbReference type="InterPro" id="IPR005670">
    <property type="entry name" value="PstB-like"/>
</dbReference>
<dbReference type="NCBIfam" id="TIGR00972">
    <property type="entry name" value="3a0107s01c2"/>
    <property type="match status" value="1"/>
</dbReference>
<dbReference type="PANTHER" id="PTHR43423">
    <property type="entry name" value="ABC TRANSPORTER I FAMILY MEMBER 17"/>
    <property type="match status" value="1"/>
</dbReference>
<dbReference type="PANTHER" id="PTHR43423:SF1">
    <property type="entry name" value="ABC TRANSPORTER I FAMILY MEMBER 17"/>
    <property type="match status" value="1"/>
</dbReference>
<dbReference type="Pfam" id="PF00005">
    <property type="entry name" value="ABC_tran"/>
    <property type="match status" value="1"/>
</dbReference>
<dbReference type="SMART" id="SM00382">
    <property type="entry name" value="AAA"/>
    <property type="match status" value="1"/>
</dbReference>
<dbReference type="SUPFAM" id="SSF52540">
    <property type="entry name" value="P-loop containing nucleoside triphosphate hydrolases"/>
    <property type="match status" value="1"/>
</dbReference>
<dbReference type="PROSITE" id="PS00211">
    <property type="entry name" value="ABC_TRANSPORTER_1"/>
    <property type="match status" value="1"/>
</dbReference>
<dbReference type="PROSITE" id="PS50893">
    <property type="entry name" value="ABC_TRANSPORTER_2"/>
    <property type="match status" value="1"/>
</dbReference>
<dbReference type="PROSITE" id="PS51238">
    <property type="entry name" value="PSTB"/>
    <property type="match status" value="1"/>
</dbReference>